<proteinExistence type="inferred from homology"/>
<reference key="1">
    <citation type="journal article" date="1995" name="Mol. Plant Microbe Interact.">
        <title>Isolation of ropB, a gene encoding a 22-kDa Rhizobium leguminosarum outer membrane protein.</title>
        <authorList>
            <person name="Roest H.P."/>
            <person name="Mulders I.H.M."/>
            <person name="Wijffelman C.A."/>
            <person name="Lugtenberg B.J.J."/>
        </authorList>
    </citation>
    <scope>NUCLEOTIDE SEQUENCE [GENOMIC DNA]</scope>
    <source>
        <strain>248</strain>
    </source>
</reference>
<accession>Q52866</accession>
<feature type="signal peptide" evidence="1">
    <location>
        <begin position="1"/>
        <end position="23"/>
    </location>
</feature>
<feature type="chain" id="PRO_0000022246" description="22 kDa outer membrane protein">
    <location>
        <begin position="24"/>
        <end position="211"/>
    </location>
</feature>
<name>ROPB_RHILV</name>
<evidence type="ECO:0000255" key="1"/>
<evidence type="ECO:0000305" key="2"/>
<gene>
    <name type="primary">ropB</name>
</gene>
<organism>
    <name type="scientific">Rhizobium leguminosarum bv. viciae</name>
    <dbReference type="NCBI Taxonomy" id="387"/>
    <lineage>
        <taxon>Bacteria</taxon>
        <taxon>Pseudomonadati</taxon>
        <taxon>Pseudomonadota</taxon>
        <taxon>Alphaproteobacteria</taxon>
        <taxon>Hyphomicrobiales</taxon>
        <taxon>Rhizobiaceae</taxon>
        <taxon>Rhizobium/Agrobacterium group</taxon>
        <taxon>Rhizobium</taxon>
    </lineage>
</organism>
<sequence>MRVLIAGLMASVFAIAGVSAAQAADRVDQVPEAPVAQEAPVKPAGSWEGFYLGGAGTYNMGDFGSDRHTYGFGGQVFTGYNWQQGQIVYGVESDLGYSGDDVSSGGVENKYGWNGSVRGRVGYDMNPFLLYGTAGLAIGDVKVSDDTSDESKTNFGYTVGAGVEAFVTNNITTRLEYRYTDYQSKDYDLDSGSFSRGYDENSVKLGIGVKF</sequence>
<dbReference type="EMBL" id="X80767">
    <property type="protein sequence ID" value="CAA56751.1"/>
    <property type="molecule type" value="Genomic_DNA"/>
</dbReference>
<dbReference type="PIR" id="S47347">
    <property type="entry name" value="S47347"/>
</dbReference>
<dbReference type="SMR" id="Q52866"/>
<dbReference type="GO" id="GO:0009279">
    <property type="term" value="C:cell outer membrane"/>
    <property type="evidence" value="ECO:0007669"/>
    <property type="project" value="UniProtKB-SubCell"/>
</dbReference>
<dbReference type="Gene3D" id="2.40.160.20">
    <property type="match status" value="1"/>
</dbReference>
<dbReference type="InterPro" id="IPR051692">
    <property type="entry name" value="OMP-like"/>
</dbReference>
<dbReference type="InterPro" id="IPR011250">
    <property type="entry name" value="OMP/PagP_b-brl"/>
</dbReference>
<dbReference type="InterPro" id="IPR027385">
    <property type="entry name" value="OMP_b-brl"/>
</dbReference>
<dbReference type="PANTHER" id="PTHR34001">
    <property type="entry name" value="BLL7405 PROTEIN"/>
    <property type="match status" value="1"/>
</dbReference>
<dbReference type="PANTHER" id="PTHR34001:SF3">
    <property type="entry name" value="BLL7405 PROTEIN"/>
    <property type="match status" value="1"/>
</dbReference>
<dbReference type="Pfam" id="PF13505">
    <property type="entry name" value="OMP_b-brl"/>
    <property type="match status" value="1"/>
</dbReference>
<dbReference type="SUPFAM" id="SSF56925">
    <property type="entry name" value="OMPA-like"/>
    <property type="match status" value="1"/>
</dbReference>
<protein>
    <recommendedName>
        <fullName>22 kDa outer membrane protein</fullName>
    </recommendedName>
</protein>
<keyword id="KW-0998">Cell outer membrane</keyword>
<keyword id="KW-0472">Membrane</keyword>
<keyword id="KW-0732">Signal</keyword>
<comment type="subcellular location">
    <subcellularLocation>
        <location>Cell outer membrane</location>
    </subcellularLocation>
</comment>
<comment type="similarity">
    <text evidence="2">Belongs to the Omp25/RopB family.</text>
</comment>